<comment type="function">
    <text evidence="1">Catalyzes the acyloin condensation reaction between C atoms 2 and 3 of pyruvate and glyceraldehyde 3-phosphate to yield 1-deoxy-D-xylulose-5-phosphate (DXP).</text>
</comment>
<comment type="catalytic activity">
    <reaction evidence="1">
        <text>D-glyceraldehyde 3-phosphate + pyruvate + H(+) = 1-deoxy-D-xylulose 5-phosphate + CO2</text>
        <dbReference type="Rhea" id="RHEA:12605"/>
        <dbReference type="ChEBI" id="CHEBI:15361"/>
        <dbReference type="ChEBI" id="CHEBI:15378"/>
        <dbReference type="ChEBI" id="CHEBI:16526"/>
        <dbReference type="ChEBI" id="CHEBI:57792"/>
        <dbReference type="ChEBI" id="CHEBI:59776"/>
        <dbReference type="EC" id="2.2.1.7"/>
    </reaction>
</comment>
<comment type="cofactor">
    <cofactor evidence="1">
        <name>Mg(2+)</name>
        <dbReference type="ChEBI" id="CHEBI:18420"/>
    </cofactor>
    <text evidence="1">Binds 1 Mg(2+) ion per subunit.</text>
</comment>
<comment type="cofactor">
    <cofactor evidence="1">
        <name>thiamine diphosphate</name>
        <dbReference type="ChEBI" id="CHEBI:58937"/>
    </cofactor>
    <text evidence="1">Binds 1 thiamine pyrophosphate per subunit.</text>
</comment>
<comment type="pathway">
    <text evidence="1">Metabolic intermediate biosynthesis; 1-deoxy-D-xylulose 5-phosphate biosynthesis; 1-deoxy-D-xylulose 5-phosphate from D-glyceraldehyde 3-phosphate and pyruvate: step 1/1.</text>
</comment>
<comment type="subunit">
    <text evidence="1">Homodimer.</text>
</comment>
<comment type="similarity">
    <text evidence="1">Belongs to the transketolase family. DXPS subfamily.</text>
</comment>
<sequence length="637" mass="68720">MNPSPLLDLIDSPQDLRRLDKKQLPRLAGELRTFLLESVGQTGGHFASNLGAVELTVALHYVYNTPEDKLVWDVGHQSYPHKILTGRKNQMHTMRQYGGLAGFPKRCESEYDAFGVGHSSTSIGAALGMAAADKQLGSDRRSVAIIGDGAMTAGQAFEALNCAGDMDVDLLVVLNDNEMSISPNVGALPKYLASNVVRDMHGLLSTVKAQTGKVLDKIPGAMEFAQKVEHKIKTLAEEAEHAKQSLSLFENFGFRYTGPVDGHNVENLVDVLEDLRGRKGPQLLHVITKKGNGYKLAENDPVKYHAVANLPKESAAQMPSEKEPKPAAKPTYTQVFGKWLCDRAAADSRLVAITPAMREGSGLVEFEQRFPDRYFDVGIAEQHAVTFAGGLACEGMKPVVAIYSTFLQRAYDQLVHDIALQNLPVLFAVDRAGIVGADGPTHAGLYDLSFLRCIPNMIVAAPSDENECRLLLSTCYQADAPAAVRYPRGTGTGVPVSDGMETVEIGKGIIRREGEKTAFIAFGSMVAPALAVAGKLNATVADMRFVKPIDEELIVRLARSHDRIVTLEENAEQGGAGSAVLEVLAKHGICKPVLLLGVADTVTGHGDPKKLLDDLGLSAEAVERRVRAWLSDRDAAN</sequence>
<keyword id="KW-0414">Isoprene biosynthesis</keyword>
<keyword id="KW-0460">Magnesium</keyword>
<keyword id="KW-0479">Metal-binding</keyword>
<keyword id="KW-0784">Thiamine biosynthesis</keyword>
<keyword id="KW-0786">Thiamine pyrophosphate</keyword>
<keyword id="KW-0808">Transferase</keyword>
<dbReference type="EC" id="2.2.1.7" evidence="1"/>
<dbReference type="EMBL" id="AL157959">
    <property type="protein sequence ID" value="CAM07859.1"/>
    <property type="molecule type" value="Genomic_DNA"/>
</dbReference>
<dbReference type="PIR" id="B81978">
    <property type="entry name" value="B81978"/>
</dbReference>
<dbReference type="RefSeq" id="WP_002247120.1">
    <property type="nucleotide sequence ID" value="NC_003116.1"/>
</dbReference>
<dbReference type="SMR" id="Q9JW13"/>
<dbReference type="EnsemblBacteria" id="CAM07859">
    <property type="protein sequence ID" value="CAM07859"/>
    <property type="gene ID" value="NMA0589"/>
</dbReference>
<dbReference type="GeneID" id="93386774"/>
<dbReference type="KEGG" id="nma:NMA0589"/>
<dbReference type="HOGENOM" id="CLU_009227_1_4_4"/>
<dbReference type="UniPathway" id="UPA00064">
    <property type="reaction ID" value="UER00091"/>
</dbReference>
<dbReference type="Proteomes" id="UP000000626">
    <property type="component" value="Chromosome"/>
</dbReference>
<dbReference type="GO" id="GO:0005829">
    <property type="term" value="C:cytosol"/>
    <property type="evidence" value="ECO:0007669"/>
    <property type="project" value="TreeGrafter"/>
</dbReference>
<dbReference type="GO" id="GO:0008661">
    <property type="term" value="F:1-deoxy-D-xylulose-5-phosphate synthase activity"/>
    <property type="evidence" value="ECO:0007669"/>
    <property type="project" value="UniProtKB-UniRule"/>
</dbReference>
<dbReference type="GO" id="GO:0000287">
    <property type="term" value="F:magnesium ion binding"/>
    <property type="evidence" value="ECO:0007669"/>
    <property type="project" value="UniProtKB-UniRule"/>
</dbReference>
<dbReference type="GO" id="GO:0030976">
    <property type="term" value="F:thiamine pyrophosphate binding"/>
    <property type="evidence" value="ECO:0007669"/>
    <property type="project" value="UniProtKB-UniRule"/>
</dbReference>
<dbReference type="GO" id="GO:0052865">
    <property type="term" value="P:1-deoxy-D-xylulose 5-phosphate biosynthetic process"/>
    <property type="evidence" value="ECO:0007669"/>
    <property type="project" value="UniProtKB-UniPathway"/>
</dbReference>
<dbReference type="GO" id="GO:0019288">
    <property type="term" value="P:isopentenyl diphosphate biosynthetic process, methylerythritol 4-phosphate pathway"/>
    <property type="evidence" value="ECO:0007669"/>
    <property type="project" value="TreeGrafter"/>
</dbReference>
<dbReference type="GO" id="GO:0016114">
    <property type="term" value="P:terpenoid biosynthetic process"/>
    <property type="evidence" value="ECO:0007669"/>
    <property type="project" value="UniProtKB-UniRule"/>
</dbReference>
<dbReference type="GO" id="GO:0009228">
    <property type="term" value="P:thiamine biosynthetic process"/>
    <property type="evidence" value="ECO:0007669"/>
    <property type="project" value="UniProtKB-UniRule"/>
</dbReference>
<dbReference type="CDD" id="cd02007">
    <property type="entry name" value="TPP_DXS"/>
    <property type="match status" value="1"/>
</dbReference>
<dbReference type="CDD" id="cd07033">
    <property type="entry name" value="TPP_PYR_DXS_TK_like"/>
    <property type="match status" value="1"/>
</dbReference>
<dbReference type="FunFam" id="3.40.50.920:FF:000002">
    <property type="entry name" value="1-deoxy-D-xylulose-5-phosphate synthase"/>
    <property type="match status" value="1"/>
</dbReference>
<dbReference type="FunFam" id="3.40.50.970:FF:000005">
    <property type="entry name" value="1-deoxy-D-xylulose-5-phosphate synthase"/>
    <property type="match status" value="1"/>
</dbReference>
<dbReference type="Gene3D" id="3.40.50.920">
    <property type="match status" value="1"/>
</dbReference>
<dbReference type="Gene3D" id="3.40.50.970">
    <property type="match status" value="2"/>
</dbReference>
<dbReference type="HAMAP" id="MF_00315">
    <property type="entry name" value="DXP_synth"/>
    <property type="match status" value="1"/>
</dbReference>
<dbReference type="InterPro" id="IPR005477">
    <property type="entry name" value="Dxylulose-5-P_synthase"/>
</dbReference>
<dbReference type="InterPro" id="IPR029061">
    <property type="entry name" value="THDP-binding"/>
</dbReference>
<dbReference type="InterPro" id="IPR009014">
    <property type="entry name" value="Transketo_C/PFOR_II"/>
</dbReference>
<dbReference type="InterPro" id="IPR005475">
    <property type="entry name" value="Transketolase-like_Pyr-bd"/>
</dbReference>
<dbReference type="InterPro" id="IPR020826">
    <property type="entry name" value="Transketolase_BS"/>
</dbReference>
<dbReference type="InterPro" id="IPR033248">
    <property type="entry name" value="Transketolase_C"/>
</dbReference>
<dbReference type="InterPro" id="IPR049557">
    <property type="entry name" value="Transketolase_CS"/>
</dbReference>
<dbReference type="NCBIfam" id="TIGR00204">
    <property type="entry name" value="dxs"/>
    <property type="match status" value="1"/>
</dbReference>
<dbReference type="NCBIfam" id="NF003933">
    <property type="entry name" value="PRK05444.2-2"/>
    <property type="match status" value="1"/>
</dbReference>
<dbReference type="PANTHER" id="PTHR43322">
    <property type="entry name" value="1-D-DEOXYXYLULOSE 5-PHOSPHATE SYNTHASE-RELATED"/>
    <property type="match status" value="1"/>
</dbReference>
<dbReference type="PANTHER" id="PTHR43322:SF5">
    <property type="entry name" value="1-DEOXY-D-XYLULOSE-5-PHOSPHATE SYNTHASE, CHLOROPLASTIC"/>
    <property type="match status" value="1"/>
</dbReference>
<dbReference type="Pfam" id="PF13292">
    <property type="entry name" value="DXP_synthase_N"/>
    <property type="match status" value="1"/>
</dbReference>
<dbReference type="Pfam" id="PF02779">
    <property type="entry name" value="Transket_pyr"/>
    <property type="match status" value="1"/>
</dbReference>
<dbReference type="Pfam" id="PF02780">
    <property type="entry name" value="Transketolase_C"/>
    <property type="match status" value="1"/>
</dbReference>
<dbReference type="SMART" id="SM00861">
    <property type="entry name" value="Transket_pyr"/>
    <property type="match status" value="1"/>
</dbReference>
<dbReference type="SUPFAM" id="SSF52518">
    <property type="entry name" value="Thiamin diphosphate-binding fold (THDP-binding)"/>
    <property type="match status" value="2"/>
</dbReference>
<dbReference type="SUPFAM" id="SSF52922">
    <property type="entry name" value="TK C-terminal domain-like"/>
    <property type="match status" value="1"/>
</dbReference>
<dbReference type="PROSITE" id="PS00801">
    <property type="entry name" value="TRANSKETOLASE_1"/>
    <property type="match status" value="1"/>
</dbReference>
<dbReference type="PROSITE" id="PS00802">
    <property type="entry name" value="TRANSKETOLASE_2"/>
    <property type="match status" value="1"/>
</dbReference>
<reference key="1">
    <citation type="journal article" date="2000" name="Nature">
        <title>Complete DNA sequence of a serogroup A strain of Neisseria meningitidis Z2491.</title>
        <authorList>
            <person name="Parkhill J."/>
            <person name="Achtman M."/>
            <person name="James K.D."/>
            <person name="Bentley S.D."/>
            <person name="Churcher C.M."/>
            <person name="Klee S.R."/>
            <person name="Morelli G."/>
            <person name="Basham D."/>
            <person name="Brown D."/>
            <person name="Chillingworth T."/>
            <person name="Davies R.M."/>
            <person name="Davis P."/>
            <person name="Devlin K."/>
            <person name="Feltwell T."/>
            <person name="Hamlin N."/>
            <person name="Holroyd S."/>
            <person name="Jagels K."/>
            <person name="Leather S."/>
            <person name="Moule S."/>
            <person name="Mungall K.L."/>
            <person name="Quail M.A."/>
            <person name="Rajandream M.A."/>
            <person name="Rutherford K.M."/>
            <person name="Simmonds M."/>
            <person name="Skelton J."/>
            <person name="Whitehead S."/>
            <person name="Spratt B.G."/>
            <person name="Barrell B.G."/>
        </authorList>
    </citation>
    <scope>NUCLEOTIDE SEQUENCE [LARGE SCALE GENOMIC DNA]</scope>
    <source>
        <strain>DSM 15465 / Z2491</strain>
    </source>
</reference>
<evidence type="ECO:0000255" key="1">
    <source>
        <dbReference type="HAMAP-Rule" id="MF_00315"/>
    </source>
</evidence>
<accession>Q9JW13</accession>
<accession>A1IQ33</accession>
<protein>
    <recommendedName>
        <fullName evidence="1">1-deoxy-D-xylulose-5-phosphate synthase</fullName>
        <ecNumber evidence="1">2.2.1.7</ecNumber>
    </recommendedName>
    <alternativeName>
        <fullName evidence="1">1-deoxyxylulose-5-phosphate synthase</fullName>
        <shortName evidence="1">DXP synthase</shortName>
        <shortName evidence="1">DXPS</shortName>
    </alternativeName>
</protein>
<proteinExistence type="inferred from homology"/>
<feature type="chain" id="PRO_0000189133" description="1-deoxy-D-xylulose-5-phosphate synthase">
    <location>
        <begin position="1"/>
        <end position="637"/>
    </location>
</feature>
<feature type="binding site" evidence="1">
    <location>
        <position position="76"/>
    </location>
    <ligand>
        <name>thiamine diphosphate</name>
        <dbReference type="ChEBI" id="CHEBI:58937"/>
    </ligand>
</feature>
<feature type="binding site" evidence="1">
    <location>
        <begin position="117"/>
        <end position="119"/>
    </location>
    <ligand>
        <name>thiamine diphosphate</name>
        <dbReference type="ChEBI" id="CHEBI:58937"/>
    </ligand>
</feature>
<feature type="binding site" evidence="1">
    <location>
        <position position="148"/>
    </location>
    <ligand>
        <name>Mg(2+)</name>
        <dbReference type="ChEBI" id="CHEBI:18420"/>
    </ligand>
</feature>
<feature type="binding site" evidence="1">
    <location>
        <begin position="149"/>
        <end position="150"/>
    </location>
    <ligand>
        <name>thiamine diphosphate</name>
        <dbReference type="ChEBI" id="CHEBI:58937"/>
    </ligand>
</feature>
<feature type="binding site" evidence="1">
    <location>
        <position position="177"/>
    </location>
    <ligand>
        <name>Mg(2+)</name>
        <dbReference type="ChEBI" id="CHEBI:18420"/>
    </ligand>
</feature>
<feature type="binding site" evidence="1">
    <location>
        <position position="177"/>
    </location>
    <ligand>
        <name>thiamine diphosphate</name>
        <dbReference type="ChEBI" id="CHEBI:58937"/>
    </ligand>
</feature>
<feature type="binding site" evidence="1">
    <location>
        <position position="294"/>
    </location>
    <ligand>
        <name>thiamine diphosphate</name>
        <dbReference type="ChEBI" id="CHEBI:58937"/>
    </ligand>
</feature>
<feature type="binding site" evidence="1">
    <location>
        <position position="381"/>
    </location>
    <ligand>
        <name>thiamine diphosphate</name>
        <dbReference type="ChEBI" id="CHEBI:58937"/>
    </ligand>
</feature>
<organism>
    <name type="scientific">Neisseria meningitidis serogroup A / serotype 4A (strain DSM 15465 / Z2491)</name>
    <dbReference type="NCBI Taxonomy" id="122587"/>
    <lineage>
        <taxon>Bacteria</taxon>
        <taxon>Pseudomonadati</taxon>
        <taxon>Pseudomonadota</taxon>
        <taxon>Betaproteobacteria</taxon>
        <taxon>Neisseriales</taxon>
        <taxon>Neisseriaceae</taxon>
        <taxon>Neisseria</taxon>
    </lineage>
</organism>
<name>DXS_NEIMA</name>
<gene>
    <name evidence="1" type="primary">dxs</name>
    <name type="ordered locus">NMA0589</name>
</gene>